<sequence length="309" mass="33782">MGINFDVSRPKARSSINMTTKFHTIGLIGKPHHPGTNQTLKRLHHWLTVQGYEVLVEERVASELGTHIVAVDLLEIGARCDLAIVVGGDGNMLGAARVLARFDVGVIGVNRGNLGFLTDLPPDAFEEALAKVLDGEFDTEHRFLLEAEVYRHGMLKASNTAVNEAVLHPGKIAHMIEFEVYIDNQFMYSQRADGMIVSTPTGSTAYALSAGGAILTPNLQALILVPMFPHTLSCRPIVVDACSTIKMVVSPENGENLEVSCDGHVHLAVLPGDEIIVRRSSEQLRLIHPKGHNYFHVLRSKLGWGSKLF</sequence>
<reference key="1">
    <citation type="submission" date="2006-08" db="EMBL/GenBank/DDBJ databases">
        <title>Complete sequence of Shewanella sp. MR-4.</title>
        <authorList>
            <consortium name="US DOE Joint Genome Institute"/>
            <person name="Copeland A."/>
            <person name="Lucas S."/>
            <person name="Lapidus A."/>
            <person name="Barry K."/>
            <person name="Detter J.C."/>
            <person name="Glavina del Rio T."/>
            <person name="Hammon N."/>
            <person name="Israni S."/>
            <person name="Dalin E."/>
            <person name="Tice H."/>
            <person name="Pitluck S."/>
            <person name="Kiss H."/>
            <person name="Brettin T."/>
            <person name="Bruce D."/>
            <person name="Han C."/>
            <person name="Tapia R."/>
            <person name="Gilna P."/>
            <person name="Schmutz J."/>
            <person name="Larimer F."/>
            <person name="Land M."/>
            <person name="Hauser L."/>
            <person name="Kyrpides N."/>
            <person name="Mikhailova N."/>
            <person name="Nealson K."/>
            <person name="Konstantinidis K."/>
            <person name="Klappenbach J."/>
            <person name="Tiedje J."/>
            <person name="Richardson P."/>
        </authorList>
    </citation>
    <scope>NUCLEOTIDE SEQUENCE [LARGE SCALE GENOMIC DNA]</scope>
    <source>
        <strain>MR-4</strain>
    </source>
</reference>
<gene>
    <name evidence="1" type="primary">nadK</name>
    <name type="ordered locus">Shewmr4_2733</name>
</gene>
<protein>
    <recommendedName>
        <fullName evidence="1">NAD kinase</fullName>
        <ecNumber evidence="1">2.7.1.23</ecNumber>
    </recommendedName>
    <alternativeName>
        <fullName evidence="1">ATP-dependent NAD kinase</fullName>
    </alternativeName>
</protein>
<organism>
    <name type="scientific">Shewanella sp. (strain MR-4)</name>
    <dbReference type="NCBI Taxonomy" id="60480"/>
    <lineage>
        <taxon>Bacteria</taxon>
        <taxon>Pseudomonadati</taxon>
        <taxon>Pseudomonadota</taxon>
        <taxon>Gammaproteobacteria</taxon>
        <taxon>Alteromonadales</taxon>
        <taxon>Shewanellaceae</taxon>
        <taxon>Shewanella</taxon>
    </lineage>
</organism>
<keyword id="KW-0067">ATP-binding</keyword>
<keyword id="KW-0963">Cytoplasm</keyword>
<keyword id="KW-0418">Kinase</keyword>
<keyword id="KW-0520">NAD</keyword>
<keyword id="KW-0521">NADP</keyword>
<keyword id="KW-0547">Nucleotide-binding</keyword>
<keyword id="KW-0808">Transferase</keyword>
<name>NADK_SHESM</name>
<evidence type="ECO:0000255" key="1">
    <source>
        <dbReference type="HAMAP-Rule" id="MF_00361"/>
    </source>
</evidence>
<dbReference type="EC" id="2.7.1.23" evidence="1"/>
<dbReference type="EMBL" id="CP000446">
    <property type="protein sequence ID" value="ABI39804.1"/>
    <property type="molecule type" value="Genomic_DNA"/>
</dbReference>
<dbReference type="SMR" id="Q0HGL3"/>
<dbReference type="KEGG" id="she:Shewmr4_2733"/>
<dbReference type="HOGENOM" id="CLU_008831_0_1_6"/>
<dbReference type="GO" id="GO:0005737">
    <property type="term" value="C:cytoplasm"/>
    <property type="evidence" value="ECO:0007669"/>
    <property type="project" value="UniProtKB-SubCell"/>
</dbReference>
<dbReference type="GO" id="GO:0005524">
    <property type="term" value="F:ATP binding"/>
    <property type="evidence" value="ECO:0007669"/>
    <property type="project" value="UniProtKB-KW"/>
</dbReference>
<dbReference type="GO" id="GO:0046872">
    <property type="term" value="F:metal ion binding"/>
    <property type="evidence" value="ECO:0007669"/>
    <property type="project" value="UniProtKB-UniRule"/>
</dbReference>
<dbReference type="GO" id="GO:0051287">
    <property type="term" value="F:NAD binding"/>
    <property type="evidence" value="ECO:0007669"/>
    <property type="project" value="UniProtKB-ARBA"/>
</dbReference>
<dbReference type="GO" id="GO:0003951">
    <property type="term" value="F:NAD+ kinase activity"/>
    <property type="evidence" value="ECO:0007669"/>
    <property type="project" value="UniProtKB-UniRule"/>
</dbReference>
<dbReference type="GO" id="GO:0019674">
    <property type="term" value="P:NAD metabolic process"/>
    <property type="evidence" value="ECO:0007669"/>
    <property type="project" value="InterPro"/>
</dbReference>
<dbReference type="GO" id="GO:0006741">
    <property type="term" value="P:NADP biosynthetic process"/>
    <property type="evidence" value="ECO:0007669"/>
    <property type="project" value="UniProtKB-UniRule"/>
</dbReference>
<dbReference type="FunFam" id="2.60.200.30:FF:000001">
    <property type="entry name" value="NAD kinase"/>
    <property type="match status" value="1"/>
</dbReference>
<dbReference type="Gene3D" id="3.40.50.10330">
    <property type="entry name" value="Probable inorganic polyphosphate/atp-NAD kinase, domain 1"/>
    <property type="match status" value="1"/>
</dbReference>
<dbReference type="Gene3D" id="2.60.200.30">
    <property type="entry name" value="Probable inorganic polyphosphate/atp-NAD kinase, domain 2"/>
    <property type="match status" value="1"/>
</dbReference>
<dbReference type="HAMAP" id="MF_00361">
    <property type="entry name" value="NAD_kinase"/>
    <property type="match status" value="1"/>
</dbReference>
<dbReference type="InterPro" id="IPR017438">
    <property type="entry name" value="ATP-NAD_kinase_N"/>
</dbReference>
<dbReference type="InterPro" id="IPR017437">
    <property type="entry name" value="ATP-NAD_kinase_PpnK-typ_C"/>
</dbReference>
<dbReference type="InterPro" id="IPR016064">
    <property type="entry name" value="NAD/diacylglycerol_kinase_sf"/>
</dbReference>
<dbReference type="InterPro" id="IPR002504">
    <property type="entry name" value="NADK"/>
</dbReference>
<dbReference type="NCBIfam" id="NF002306">
    <property type="entry name" value="PRK01231.1"/>
    <property type="match status" value="1"/>
</dbReference>
<dbReference type="NCBIfam" id="NF002893">
    <property type="entry name" value="PRK03378.1"/>
    <property type="match status" value="1"/>
</dbReference>
<dbReference type="PANTHER" id="PTHR20275">
    <property type="entry name" value="NAD KINASE"/>
    <property type="match status" value="1"/>
</dbReference>
<dbReference type="PANTHER" id="PTHR20275:SF0">
    <property type="entry name" value="NAD KINASE"/>
    <property type="match status" value="1"/>
</dbReference>
<dbReference type="Pfam" id="PF01513">
    <property type="entry name" value="NAD_kinase"/>
    <property type="match status" value="1"/>
</dbReference>
<dbReference type="Pfam" id="PF20143">
    <property type="entry name" value="NAD_kinase_C"/>
    <property type="match status" value="1"/>
</dbReference>
<dbReference type="SUPFAM" id="SSF111331">
    <property type="entry name" value="NAD kinase/diacylglycerol kinase-like"/>
    <property type="match status" value="1"/>
</dbReference>
<accession>Q0HGL3</accession>
<proteinExistence type="inferred from homology"/>
<comment type="function">
    <text evidence="1">Involved in the regulation of the intracellular balance of NAD and NADP, and is a key enzyme in the biosynthesis of NADP. Catalyzes specifically the phosphorylation on 2'-hydroxyl of the adenosine moiety of NAD to yield NADP.</text>
</comment>
<comment type="catalytic activity">
    <reaction evidence="1">
        <text>NAD(+) + ATP = ADP + NADP(+) + H(+)</text>
        <dbReference type="Rhea" id="RHEA:18629"/>
        <dbReference type="ChEBI" id="CHEBI:15378"/>
        <dbReference type="ChEBI" id="CHEBI:30616"/>
        <dbReference type="ChEBI" id="CHEBI:57540"/>
        <dbReference type="ChEBI" id="CHEBI:58349"/>
        <dbReference type="ChEBI" id="CHEBI:456216"/>
        <dbReference type="EC" id="2.7.1.23"/>
    </reaction>
</comment>
<comment type="cofactor">
    <cofactor evidence="1">
        <name>a divalent metal cation</name>
        <dbReference type="ChEBI" id="CHEBI:60240"/>
    </cofactor>
</comment>
<comment type="subcellular location">
    <subcellularLocation>
        <location evidence="1">Cytoplasm</location>
    </subcellularLocation>
</comment>
<comment type="similarity">
    <text evidence="1">Belongs to the NAD kinase family.</text>
</comment>
<feature type="chain" id="PRO_1000079517" description="NAD kinase">
    <location>
        <begin position="1"/>
        <end position="309"/>
    </location>
</feature>
<feature type="active site" description="Proton acceptor" evidence="1">
    <location>
        <position position="89"/>
    </location>
</feature>
<feature type="binding site" evidence="1">
    <location>
        <begin position="89"/>
        <end position="90"/>
    </location>
    <ligand>
        <name>NAD(+)</name>
        <dbReference type="ChEBI" id="CHEBI:57540"/>
    </ligand>
</feature>
<feature type="binding site" evidence="1">
    <location>
        <begin position="163"/>
        <end position="164"/>
    </location>
    <ligand>
        <name>NAD(+)</name>
        <dbReference type="ChEBI" id="CHEBI:57540"/>
    </ligand>
</feature>
<feature type="binding site" evidence="1">
    <location>
        <position position="174"/>
    </location>
    <ligand>
        <name>NAD(+)</name>
        <dbReference type="ChEBI" id="CHEBI:57540"/>
    </ligand>
</feature>
<feature type="binding site" evidence="1">
    <location>
        <position position="191"/>
    </location>
    <ligand>
        <name>NAD(+)</name>
        <dbReference type="ChEBI" id="CHEBI:57540"/>
    </ligand>
</feature>
<feature type="binding site" evidence="1">
    <location>
        <position position="193"/>
    </location>
    <ligand>
        <name>NAD(+)</name>
        <dbReference type="ChEBI" id="CHEBI:57540"/>
    </ligand>
</feature>
<feature type="binding site" evidence="1">
    <location>
        <begin position="204"/>
        <end position="209"/>
    </location>
    <ligand>
        <name>NAD(+)</name>
        <dbReference type="ChEBI" id="CHEBI:57540"/>
    </ligand>
</feature>